<feature type="chain" id="PRO_0000121956" description="Probable tRNA pseudouridine synthase B">
    <location>
        <begin position="1"/>
        <end position="314"/>
    </location>
</feature>
<feature type="domain" description="PUA" evidence="1">
    <location>
        <begin position="237"/>
        <end position="314"/>
    </location>
</feature>
<feature type="region of interest" description="Disordered" evidence="2">
    <location>
        <begin position="1"/>
        <end position="30"/>
    </location>
</feature>
<feature type="compositionally biased region" description="Basic residues" evidence="2">
    <location>
        <begin position="1"/>
        <end position="10"/>
    </location>
</feature>
<feature type="active site" description="Nucleophile" evidence="1">
    <location>
        <position position="72"/>
    </location>
</feature>
<proteinExistence type="inferred from homology"/>
<accession>Q5UXH1</accession>
<reference key="1">
    <citation type="journal article" date="2004" name="Genome Res.">
        <title>Genome sequence of Haloarcula marismortui: a halophilic archaeon from the Dead Sea.</title>
        <authorList>
            <person name="Baliga N.S."/>
            <person name="Bonneau R."/>
            <person name="Facciotti M.T."/>
            <person name="Pan M."/>
            <person name="Glusman G."/>
            <person name="Deutsch E.W."/>
            <person name="Shannon P."/>
            <person name="Chiu Y."/>
            <person name="Weng R.S."/>
            <person name="Gan R.R."/>
            <person name="Hung P."/>
            <person name="Date S.V."/>
            <person name="Marcotte E."/>
            <person name="Hood L."/>
            <person name="Ng W.V."/>
        </authorList>
    </citation>
    <scope>NUCLEOTIDE SEQUENCE [LARGE SCALE GENOMIC DNA]</scope>
    <source>
        <strain>ATCC 43049 / DSM 3752 / JCM 8966 / VKM B-1809</strain>
    </source>
</reference>
<dbReference type="EC" id="5.4.99.25" evidence="1"/>
<dbReference type="EMBL" id="AY596297">
    <property type="protein sequence ID" value="AAV48032.1"/>
    <property type="molecule type" value="Genomic_DNA"/>
</dbReference>
<dbReference type="SMR" id="Q5UXH1"/>
<dbReference type="STRING" id="272569.rrnAC3342"/>
<dbReference type="PaxDb" id="272569-rrnAC3342"/>
<dbReference type="EnsemblBacteria" id="AAV48032">
    <property type="protein sequence ID" value="AAV48032"/>
    <property type="gene ID" value="rrnAC3342"/>
</dbReference>
<dbReference type="KEGG" id="hma:rrnAC3342"/>
<dbReference type="PATRIC" id="fig|272569.17.peg.3868"/>
<dbReference type="eggNOG" id="arCOG00987">
    <property type="taxonomic scope" value="Archaea"/>
</dbReference>
<dbReference type="HOGENOM" id="CLU_032087_3_0_2"/>
<dbReference type="Proteomes" id="UP000001169">
    <property type="component" value="Chromosome I"/>
</dbReference>
<dbReference type="GO" id="GO:0003723">
    <property type="term" value="F:RNA binding"/>
    <property type="evidence" value="ECO:0007669"/>
    <property type="project" value="InterPro"/>
</dbReference>
<dbReference type="GO" id="GO:0160148">
    <property type="term" value="F:tRNA pseudouridine(55) synthase activity"/>
    <property type="evidence" value="ECO:0007669"/>
    <property type="project" value="UniProtKB-EC"/>
</dbReference>
<dbReference type="GO" id="GO:0000495">
    <property type="term" value="P:box H/ACA sno(s)RNA 3'-end processing"/>
    <property type="evidence" value="ECO:0007669"/>
    <property type="project" value="TreeGrafter"/>
</dbReference>
<dbReference type="GO" id="GO:1990481">
    <property type="term" value="P:mRNA pseudouridine synthesis"/>
    <property type="evidence" value="ECO:0007669"/>
    <property type="project" value="TreeGrafter"/>
</dbReference>
<dbReference type="GO" id="GO:0031118">
    <property type="term" value="P:rRNA pseudouridine synthesis"/>
    <property type="evidence" value="ECO:0007669"/>
    <property type="project" value="TreeGrafter"/>
</dbReference>
<dbReference type="GO" id="GO:0031120">
    <property type="term" value="P:snRNA pseudouridine synthesis"/>
    <property type="evidence" value="ECO:0007669"/>
    <property type="project" value="TreeGrafter"/>
</dbReference>
<dbReference type="GO" id="GO:0031119">
    <property type="term" value="P:tRNA pseudouridine synthesis"/>
    <property type="evidence" value="ECO:0007669"/>
    <property type="project" value="UniProtKB-UniRule"/>
</dbReference>
<dbReference type="CDD" id="cd02572">
    <property type="entry name" value="PseudoU_synth_hDyskerin"/>
    <property type="match status" value="1"/>
</dbReference>
<dbReference type="CDD" id="cd21148">
    <property type="entry name" value="PUA_Cbf5"/>
    <property type="match status" value="1"/>
</dbReference>
<dbReference type="Gene3D" id="3.30.2350.10">
    <property type="entry name" value="Pseudouridine synthase"/>
    <property type="match status" value="1"/>
</dbReference>
<dbReference type="Gene3D" id="2.30.130.10">
    <property type="entry name" value="PUA domain"/>
    <property type="match status" value="1"/>
</dbReference>
<dbReference type="HAMAP" id="MF_01081">
    <property type="entry name" value="TruB_arch"/>
    <property type="match status" value="1"/>
</dbReference>
<dbReference type="InterPro" id="IPR012960">
    <property type="entry name" value="Dyskerin-like"/>
</dbReference>
<dbReference type="InterPro" id="IPR020103">
    <property type="entry name" value="PsdUridine_synth_cat_dom_sf"/>
</dbReference>
<dbReference type="InterPro" id="IPR002501">
    <property type="entry name" value="PsdUridine_synth_N"/>
</dbReference>
<dbReference type="InterPro" id="IPR015947">
    <property type="entry name" value="PUA-like_sf"/>
</dbReference>
<dbReference type="InterPro" id="IPR036974">
    <property type="entry name" value="PUA_sf"/>
</dbReference>
<dbReference type="InterPro" id="IPR004802">
    <property type="entry name" value="tRNA_PsdUridine_synth_B_fam"/>
</dbReference>
<dbReference type="InterPro" id="IPR026326">
    <property type="entry name" value="TruB_arch"/>
</dbReference>
<dbReference type="InterPro" id="IPR032819">
    <property type="entry name" value="TruB_C"/>
</dbReference>
<dbReference type="NCBIfam" id="TIGR00425">
    <property type="entry name" value="CBF5"/>
    <property type="match status" value="1"/>
</dbReference>
<dbReference type="NCBIfam" id="NF003280">
    <property type="entry name" value="PRK04270.1"/>
    <property type="match status" value="1"/>
</dbReference>
<dbReference type="PANTHER" id="PTHR23127">
    <property type="entry name" value="CENTROMERE/MICROTUBULE BINDING PROTEIN CBF5"/>
    <property type="match status" value="1"/>
</dbReference>
<dbReference type="PANTHER" id="PTHR23127:SF0">
    <property type="entry name" value="H_ACA RIBONUCLEOPROTEIN COMPLEX SUBUNIT DKC1"/>
    <property type="match status" value="1"/>
</dbReference>
<dbReference type="Pfam" id="PF08068">
    <property type="entry name" value="DKCLD"/>
    <property type="match status" value="1"/>
</dbReference>
<dbReference type="Pfam" id="PF16198">
    <property type="entry name" value="TruB_C_2"/>
    <property type="match status" value="1"/>
</dbReference>
<dbReference type="Pfam" id="PF01509">
    <property type="entry name" value="TruB_N"/>
    <property type="match status" value="1"/>
</dbReference>
<dbReference type="SMART" id="SM01136">
    <property type="entry name" value="DKCLD"/>
    <property type="match status" value="1"/>
</dbReference>
<dbReference type="SUPFAM" id="SSF55120">
    <property type="entry name" value="Pseudouridine synthase"/>
    <property type="match status" value="1"/>
</dbReference>
<dbReference type="SUPFAM" id="SSF88697">
    <property type="entry name" value="PUA domain-like"/>
    <property type="match status" value="1"/>
</dbReference>
<dbReference type="PROSITE" id="PS50890">
    <property type="entry name" value="PUA"/>
    <property type="match status" value="1"/>
</dbReference>
<protein>
    <recommendedName>
        <fullName evidence="1">Probable tRNA pseudouridine synthase B</fullName>
        <ecNumber evidence="1">5.4.99.25</ecNumber>
    </recommendedName>
    <alternativeName>
        <fullName evidence="1">tRNA pseudouridine(55) synthase</fullName>
        <shortName evidence="1">Psi55 synthase</shortName>
    </alternativeName>
    <alternativeName>
        <fullName evidence="1">tRNA pseudouridylate synthase</fullName>
    </alternativeName>
    <alternativeName>
        <fullName evidence="1">tRNA-uridine isomerase</fullName>
    </alternativeName>
</protein>
<organism>
    <name type="scientific">Haloarcula marismortui (strain ATCC 43049 / DSM 3752 / JCM 8966 / VKM B-1809)</name>
    <name type="common">Halobacterium marismortui</name>
    <dbReference type="NCBI Taxonomy" id="272569"/>
    <lineage>
        <taxon>Archaea</taxon>
        <taxon>Methanobacteriati</taxon>
        <taxon>Methanobacteriota</taxon>
        <taxon>Stenosarchaea group</taxon>
        <taxon>Halobacteria</taxon>
        <taxon>Halobacteriales</taxon>
        <taxon>Haloarculaceae</taxon>
        <taxon>Haloarcula</taxon>
    </lineage>
</organism>
<name>TRUB_HALMA</name>
<gene>
    <name evidence="1" type="primary">truB</name>
    <name type="ordered locus">rrnAC3342</name>
</gene>
<comment type="function">
    <text evidence="1">Could be responsible for synthesis of pseudouridine from uracil-55 in the psi GC loop of transfer RNAs.</text>
</comment>
<comment type="catalytic activity">
    <reaction evidence="1">
        <text>uridine(55) in tRNA = pseudouridine(55) in tRNA</text>
        <dbReference type="Rhea" id="RHEA:42532"/>
        <dbReference type="Rhea" id="RHEA-COMP:10101"/>
        <dbReference type="Rhea" id="RHEA-COMP:10102"/>
        <dbReference type="ChEBI" id="CHEBI:65314"/>
        <dbReference type="ChEBI" id="CHEBI:65315"/>
        <dbReference type="EC" id="5.4.99.25"/>
    </reaction>
</comment>
<comment type="similarity">
    <text evidence="1">Belongs to the pseudouridine synthase TruB family. Type 2 subfamily.</text>
</comment>
<evidence type="ECO:0000255" key="1">
    <source>
        <dbReference type="HAMAP-Rule" id="MF_01081"/>
    </source>
</evidence>
<evidence type="ECO:0000256" key="2">
    <source>
        <dbReference type="SAM" id="MobiDB-lite"/>
    </source>
</evidence>
<sequence length="314" mass="33529">MATRGRHRSRTSGTSSEPMTLRAPPDERDLDSLRSFGVVNLDKPPGPSAHQVAAWIRDATGQDRVAHGGTLDPKVTGCLPVLLGDAARMAQVFDNAVKEYVTVLELHDQAPADIADIVAEFETDIYQKPPRKSAVKRQLRSRRIHSLDILEQGDRRLLLRVRCASGTYIRKLCHDIGLAAGTGAHMGDLRRTATGTFDDGSLSTMHDLVDALAFAADGDEAQLREIIQPAERALSHLPRVTIAPSAAREVAEGAPVYAPGVIETGPAEVGDATPEIDSQVVSVTPDGAAVCLGTLVSDPDADSGLVVELDRMLV</sequence>
<keyword id="KW-0413">Isomerase</keyword>
<keyword id="KW-1185">Reference proteome</keyword>
<keyword id="KW-0819">tRNA processing</keyword>